<reference key="1">
    <citation type="submission" date="2006-09" db="EMBL/GenBank/DDBJ databases">
        <authorList>
            <consortium name="The Klebsiella pneumonia Genome Sequencing Project"/>
            <person name="McClelland M."/>
            <person name="Sanderson E.K."/>
            <person name="Spieth J."/>
            <person name="Clifton W.S."/>
            <person name="Latreille P."/>
            <person name="Sabo A."/>
            <person name="Pepin K."/>
            <person name="Bhonagiri V."/>
            <person name="Porwollik S."/>
            <person name="Ali J."/>
            <person name="Wilson R.K."/>
        </authorList>
    </citation>
    <scope>NUCLEOTIDE SEQUENCE [LARGE SCALE GENOMIC DNA]</scope>
    <source>
        <strain>ATCC 700721 / MGH 78578</strain>
    </source>
</reference>
<accession>A6T814</accession>
<keyword id="KW-0997">Cell inner membrane</keyword>
<keyword id="KW-1003">Cell membrane</keyword>
<keyword id="KW-0472">Membrane</keyword>
<keyword id="KW-0812">Transmembrane</keyword>
<keyword id="KW-1133">Transmembrane helix</keyword>
<proteinExistence type="inferred from homology"/>
<protein>
    <recommendedName>
        <fullName evidence="1">UPF0283 membrane protein KPN78578_12740</fullName>
    </recommendedName>
</protein>
<sequence length="353" mass="39120">MSEPLKPRIDFDGPLQAEKIPPLKGARAFDTLEADNFAPARLVTGEEEEGAAEAVVESVLRPKRSLWRRMVSAGLAIFGVSVVAQGVQWTANAWQTQDWIALGGCVAGALIVGAGVGSLATEWRRLWRLRQRAHERDEARDMLHSHAVGKAKAFCEKLAQQAGLDQSHPALQRWYAAIHETQSDREVVSLYAQLVQPVLDAQARREISRSAAESTLMIAVSPLALVDMAFIAWRNLRLINRIATLYGIELGYYSRLRLFRLVLLNIAFAGASELVREVGMDWMSQDLAARLSARAAQGIGAGLLTARLGIKAMELCRPLPWIADDKPRLGDFRRELIGQLKETLQKSKTRPEK</sequence>
<gene>
    <name type="ordered locus">KPN78578_12740</name>
    <name type="ORF">KPN_01302</name>
</gene>
<dbReference type="EMBL" id="CP000647">
    <property type="protein sequence ID" value="ABR76735.1"/>
    <property type="molecule type" value="Genomic_DNA"/>
</dbReference>
<dbReference type="RefSeq" id="WP_004140239.1">
    <property type="nucleotide sequence ID" value="NC_009648.1"/>
</dbReference>
<dbReference type="SMR" id="A6T814"/>
<dbReference type="STRING" id="272620.KPN_01302"/>
<dbReference type="jPOST" id="A6T814"/>
<dbReference type="PaxDb" id="272620-KPN_01302"/>
<dbReference type="EnsemblBacteria" id="ABR76735">
    <property type="protein sequence ID" value="ABR76735"/>
    <property type="gene ID" value="KPN_01302"/>
</dbReference>
<dbReference type="KEGG" id="kpn:KPN_01302"/>
<dbReference type="HOGENOM" id="CLU_057693_2_0_6"/>
<dbReference type="Proteomes" id="UP000000265">
    <property type="component" value="Chromosome"/>
</dbReference>
<dbReference type="GO" id="GO:0005886">
    <property type="term" value="C:plasma membrane"/>
    <property type="evidence" value="ECO:0007669"/>
    <property type="project" value="UniProtKB-SubCell"/>
</dbReference>
<dbReference type="HAMAP" id="MF_01085">
    <property type="entry name" value="UPF0283"/>
    <property type="match status" value="1"/>
</dbReference>
<dbReference type="InterPro" id="IPR021147">
    <property type="entry name" value="DUF697"/>
</dbReference>
<dbReference type="InterPro" id="IPR006507">
    <property type="entry name" value="UPF0283"/>
</dbReference>
<dbReference type="NCBIfam" id="TIGR01620">
    <property type="entry name" value="hyp_HI0043"/>
    <property type="match status" value="1"/>
</dbReference>
<dbReference type="PANTHER" id="PTHR39342">
    <property type="entry name" value="UPF0283 MEMBRANE PROTEIN YCJF"/>
    <property type="match status" value="1"/>
</dbReference>
<dbReference type="PANTHER" id="PTHR39342:SF1">
    <property type="entry name" value="UPF0283 MEMBRANE PROTEIN YCJF"/>
    <property type="match status" value="1"/>
</dbReference>
<dbReference type="Pfam" id="PF05128">
    <property type="entry name" value="DUF697"/>
    <property type="match status" value="1"/>
</dbReference>
<evidence type="ECO:0000255" key="1">
    <source>
        <dbReference type="HAMAP-Rule" id="MF_01085"/>
    </source>
</evidence>
<name>Y1274_KLEP7</name>
<comment type="subcellular location">
    <subcellularLocation>
        <location evidence="1">Cell inner membrane</location>
        <topology evidence="1">Multi-pass membrane protein</topology>
    </subcellularLocation>
</comment>
<comment type="similarity">
    <text evidence="1">Belongs to the UPF0283 family.</text>
</comment>
<organism>
    <name type="scientific">Klebsiella pneumoniae subsp. pneumoniae (strain ATCC 700721 / MGH 78578)</name>
    <dbReference type="NCBI Taxonomy" id="272620"/>
    <lineage>
        <taxon>Bacteria</taxon>
        <taxon>Pseudomonadati</taxon>
        <taxon>Pseudomonadota</taxon>
        <taxon>Gammaproteobacteria</taxon>
        <taxon>Enterobacterales</taxon>
        <taxon>Enterobacteriaceae</taxon>
        <taxon>Klebsiella/Raoultella group</taxon>
        <taxon>Klebsiella</taxon>
        <taxon>Klebsiella pneumoniae complex</taxon>
    </lineage>
</organism>
<feature type="chain" id="PRO_1000064844" description="UPF0283 membrane protein KPN78578_12740">
    <location>
        <begin position="1"/>
        <end position="353"/>
    </location>
</feature>
<feature type="transmembrane region" description="Helical" evidence="1">
    <location>
        <begin position="70"/>
        <end position="90"/>
    </location>
</feature>
<feature type="transmembrane region" description="Helical" evidence="1">
    <location>
        <begin position="99"/>
        <end position="119"/>
    </location>
</feature>
<feature type="transmembrane region" description="Helical" evidence="1">
    <location>
        <begin position="213"/>
        <end position="233"/>
    </location>
</feature>